<accession>Q1RI24</accession>
<reference key="1">
    <citation type="journal article" date="2006" name="PLoS Genet.">
        <title>Genome sequence of Rickettsia bellii illuminates the role of amoebae in gene exchanges between intracellular pathogens.</title>
        <authorList>
            <person name="Ogata H."/>
            <person name="La Scola B."/>
            <person name="Audic S."/>
            <person name="Renesto P."/>
            <person name="Blanc G."/>
            <person name="Robert C."/>
            <person name="Fournier P.-E."/>
            <person name="Claverie J.-M."/>
            <person name="Raoult D."/>
        </authorList>
    </citation>
    <scope>NUCLEOTIDE SEQUENCE [LARGE SCALE GENOMIC DNA]</scope>
    <source>
        <strain>RML369-C</strain>
    </source>
</reference>
<dbReference type="EMBL" id="CP000087">
    <property type="protein sequence ID" value="ABE04990.1"/>
    <property type="molecule type" value="Genomic_DNA"/>
</dbReference>
<dbReference type="RefSeq" id="WP_011477572.1">
    <property type="nucleotide sequence ID" value="NC_007940.1"/>
</dbReference>
<dbReference type="KEGG" id="rbe:RBE_0909"/>
<dbReference type="HOGENOM" id="CLU_1569490_0_0_5"/>
<dbReference type="Proteomes" id="UP000001951">
    <property type="component" value="Chromosome"/>
</dbReference>
<gene>
    <name type="ordered locus">RBE_0909</name>
</gene>
<comment type="similarity">
    <text evidence="1">Belongs to the UPF0416 family.</text>
</comment>
<sequence length="163" mass="16978">MLKSLKQHTTTSLVLQHFANAGQAAVNCGMYAGLAATYGGKAMFQGVLGLCAYKEFAGEVMTGHAFGFAMPKVLSGLVAGVAGAIYHHPTAVMATFVTAAILTSPENAYETVKNAAFTGLEAAHFVYENTAGIANGVAGICNLVYENLPSHSEVSTSNICNRR</sequence>
<protein>
    <recommendedName>
        <fullName>UPF0416 protein RBE_0909</fullName>
    </recommendedName>
</protein>
<proteinExistence type="inferred from homology"/>
<name>Y909_RICBR</name>
<organism>
    <name type="scientific">Rickettsia bellii (strain RML369-C)</name>
    <dbReference type="NCBI Taxonomy" id="336407"/>
    <lineage>
        <taxon>Bacteria</taxon>
        <taxon>Pseudomonadati</taxon>
        <taxon>Pseudomonadota</taxon>
        <taxon>Alphaproteobacteria</taxon>
        <taxon>Rickettsiales</taxon>
        <taxon>Rickettsiaceae</taxon>
        <taxon>Rickettsieae</taxon>
        <taxon>Rickettsia</taxon>
        <taxon>belli group</taxon>
    </lineage>
</organism>
<evidence type="ECO:0000305" key="1"/>
<feature type="chain" id="PRO_0000279866" description="UPF0416 protein RBE_0909">
    <location>
        <begin position="1"/>
        <end position="163"/>
    </location>
</feature>